<organism>
    <name type="scientific">Draba nemorosa</name>
    <name type="common">Woodland whitlowgrass</name>
    <dbReference type="NCBI Taxonomy" id="171822"/>
    <lineage>
        <taxon>Eukaryota</taxon>
        <taxon>Viridiplantae</taxon>
        <taxon>Streptophyta</taxon>
        <taxon>Embryophyta</taxon>
        <taxon>Tracheophyta</taxon>
        <taxon>Spermatophyta</taxon>
        <taxon>Magnoliopsida</taxon>
        <taxon>eudicotyledons</taxon>
        <taxon>Gunneridae</taxon>
        <taxon>Pentapetalae</taxon>
        <taxon>rosids</taxon>
        <taxon>malvids</taxon>
        <taxon>Brassicales</taxon>
        <taxon>Brassicaceae</taxon>
        <taxon>Arabideae</taxon>
        <taxon>Draba</taxon>
    </lineage>
</organism>
<evidence type="ECO:0000255" key="1">
    <source>
        <dbReference type="HAMAP-Rule" id="MF_01390"/>
    </source>
</evidence>
<keyword id="KW-0150">Chloroplast</keyword>
<keyword id="KW-0507">mRNA processing</keyword>
<keyword id="KW-0934">Plastid</keyword>
<keyword id="KW-0694">RNA-binding</keyword>
<keyword id="KW-0819">tRNA processing</keyword>
<feature type="chain" id="PRO_0000355932" description="Maturase K">
    <location>
        <begin position="1"/>
        <end position="504"/>
    </location>
</feature>
<sequence length="504" mass="60452">MEKFQGYLEFDGARQQSFLYPLFFREYIYVLAYDHGLNRLNRNRSIFVENSDYEKKYSSLIVKRLIWRMYEQNRLIIPTTDLHKNPVLGHTNHLYYQMISVLFAVIVEIPFSLSLGFSFEGKQIKKSYNLQSIHSLFPFLEDKLSHFNYVLDVLIPYPIHLEILVQTLRYRVKDASSLHFFRFCLYEYGNWKNFDIKKKCILNPRFFLFLYNSHICEYESIFFFLRKRSSHLRSIAYEVFFERILFYGKIHHFFKVFVNNFPATLGLLKDPFLHYVRYHGKNILATKDTPLLMNKWKFYFLNFWQCYFSVWFPSQKVNINQLSKDNLEFLGYLSSLRLNPLVVRSQMLENSFLIDNIRIKFDSKIPISSIIGSLAKDKFCNVLGHPISKATWTDSSDSDILNRFVRICRKISHYYSGSSKKKNLYRIKYILRLCCVKTLARKHKSTVRAFLKRLGSVLLEEFLTGEDQVLSLIFPRSYYASKRLYRVRIWYLDILYLHDLVNHE</sequence>
<geneLocation type="chloroplast"/>
<proteinExistence type="inferred from homology"/>
<name>MATK_DRANE</name>
<dbReference type="EMBL" id="AP009373">
    <property type="protein sequence ID" value="BAF50356.1"/>
    <property type="molecule type" value="Genomic_DNA"/>
</dbReference>
<dbReference type="RefSeq" id="YP_001123532.1">
    <property type="nucleotide sequence ID" value="NC_009272.1"/>
</dbReference>
<dbReference type="GeneID" id="4964792"/>
<dbReference type="GO" id="GO:0009507">
    <property type="term" value="C:chloroplast"/>
    <property type="evidence" value="ECO:0007669"/>
    <property type="project" value="UniProtKB-SubCell"/>
</dbReference>
<dbReference type="GO" id="GO:0003723">
    <property type="term" value="F:RNA binding"/>
    <property type="evidence" value="ECO:0007669"/>
    <property type="project" value="UniProtKB-KW"/>
</dbReference>
<dbReference type="GO" id="GO:0006397">
    <property type="term" value="P:mRNA processing"/>
    <property type="evidence" value="ECO:0007669"/>
    <property type="project" value="UniProtKB-KW"/>
</dbReference>
<dbReference type="GO" id="GO:0008380">
    <property type="term" value="P:RNA splicing"/>
    <property type="evidence" value="ECO:0007669"/>
    <property type="project" value="UniProtKB-UniRule"/>
</dbReference>
<dbReference type="GO" id="GO:0008033">
    <property type="term" value="P:tRNA processing"/>
    <property type="evidence" value="ECO:0007669"/>
    <property type="project" value="UniProtKB-KW"/>
</dbReference>
<dbReference type="HAMAP" id="MF_01390">
    <property type="entry name" value="MatK"/>
    <property type="match status" value="1"/>
</dbReference>
<dbReference type="InterPro" id="IPR024937">
    <property type="entry name" value="Domain_X"/>
</dbReference>
<dbReference type="InterPro" id="IPR002866">
    <property type="entry name" value="Maturase_MatK"/>
</dbReference>
<dbReference type="InterPro" id="IPR024942">
    <property type="entry name" value="Maturase_MatK_N"/>
</dbReference>
<dbReference type="PANTHER" id="PTHR34811">
    <property type="entry name" value="MATURASE K"/>
    <property type="match status" value="1"/>
</dbReference>
<dbReference type="PANTHER" id="PTHR34811:SF1">
    <property type="entry name" value="MATURASE K"/>
    <property type="match status" value="1"/>
</dbReference>
<dbReference type="Pfam" id="PF01348">
    <property type="entry name" value="Intron_maturas2"/>
    <property type="match status" value="1"/>
</dbReference>
<dbReference type="Pfam" id="PF01824">
    <property type="entry name" value="MatK_N"/>
    <property type="match status" value="1"/>
</dbReference>
<accession>A4QL01</accession>
<protein>
    <recommendedName>
        <fullName evidence="1">Maturase K</fullName>
    </recommendedName>
    <alternativeName>
        <fullName evidence="1">Intron maturase</fullName>
    </alternativeName>
</protein>
<reference key="1">
    <citation type="submission" date="2007-03" db="EMBL/GenBank/DDBJ databases">
        <title>Sequencing analysis of Draba nemoroza chloroplast DNA.</title>
        <authorList>
            <person name="Hosouchi T."/>
            <person name="Tsuruoka H."/>
            <person name="Kotani H."/>
        </authorList>
    </citation>
    <scope>NUCLEOTIDE SEQUENCE [LARGE SCALE GENOMIC DNA]</scope>
</reference>
<comment type="function">
    <text evidence="1">Usually encoded in the trnK tRNA gene intron. Probably assists in splicing its own and other chloroplast group II introns.</text>
</comment>
<comment type="subcellular location">
    <subcellularLocation>
        <location>Plastid</location>
        <location>Chloroplast</location>
    </subcellularLocation>
</comment>
<comment type="similarity">
    <text evidence="1">Belongs to the intron maturase 2 family. MatK subfamily.</text>
</comment>
<gene>
    <name evidence="1" type="primary">matK</name>
</gene>